<dbReference type="EMBL" id="U06430">
    <property type="protein sequence ID" value="AAA21488.1"/>
    <property type="molecule type" value="Genomic_DNA"/>
</dbReference>
<dbReference type="SMR" id="Q36227"/>
<dbReference type="GO" id="GO:0005743">
    <property type="term" value="C:mitochondrial inner membrane"/>
    <property type="evidence" value="ECO:0007669"/>
    <property type="project" value="UniProtKB-SubCell"/>
</dbReference>
<dbReference type="GO" id="GO:0045275">
    <property type="term" value="C:respiratory chain complex III"/>
    <property type="evidence" value="ECO:0007669"/>
    <property type="project" value="InterPro"/>
</dbReference>
<dbReference type="GO" id="GO:0046872">
    <property type="term" value="F:metal ion binding"/>
    <property type="evidence" value="ECO:0007669"/>
    <property type="project" value="UniProtKB-KW"/>
</dbReference>
<dbReference type="GO" id="GO:0008121">
    <property type="term" value="F:ubiquinol-cytochrome-c reductase activity"/>
    <property type="evidence" value="ECO:0007669"/>
    <property type="project" value="InterPro"/>
</dbReference>
<dbReference type="GO" id="GO:0006122">
    <property type="term" value="P:mitochondrial electron transport, ubiquinol to cytochrome c"/>
    <property type="evidence" value="ECO:0007669"/>
    <property type="project" value="TreeGrafter"/>
</dbReference>
<dbReference type="CDD" id="cd00290">
    <property type="entry name" value="cytochrome_b_C"/>
    <property type="match status" value="1"/>
</dbReference>
<dbReference type="CDD" id="cd00284">
    <property type="entry name" value="Cytochrome_b_N"/>
    <property type="match status" value="1"/>
</dbReference>
<dbReference type="FunFam" id="1.20.810.10:FF:000002">
    <property type="entry name" value="Cytochrome b"/>
    <property type="match status" value="1"/>
</dbReference>
<dbReference type="Gene3D" id="1.20.810.10">
    <property type="entry name" value="Cytochrome Bc1 Complex, Chain C"/>
    <property type="match status" value="1"/>
</dbReference>
<dbReference type="InterPro" id="IPR005798">
    <property type="entry name" value="Cyt_b/b6_C"/>
</dbReference>
<dbReference type="InterPro" id="IPR036150">
    <property type="entry name" value="Cyt_b/b6_C_sf"/>
</dbReference>
<dbReference type="InterPro" id="IPR005797">
    <property type="entry name" value="Cyt_b/b6_N"/>
</dbReference>
<dbReference type="InterPro" id="IPR027387">
    <property type="entry name" value="Cytb/b6-like_sf"/>
</dbReference>
<dbReference type="InterPro" id="IPR030689">
    <property type="entry name" value="Cytochrome_b"/>
</dbReference>
<dbReference type="InterPro" id="IPR048260">
    <property type="entry name" value="Cytochrome_b_C_euk/bac"/>
</dbReference>
<dbReference type="InterPro" id="IPR048259">
    <property type="entry name" value="Cytochrome_b_N_euk/bac"/>
</dbReference>
<dbReference type="InterPro" id="IPR016174">
    <property type="entry name" value="Di-haem_cyt_TM"/>
</dbReference>
<dbReference type="PANTHER" id="PTHR19271">
    <property type="entry name" value="CYTOCHROME B"/>
    <property type="match status" value="1"/>
</dbReference>
<dbReference type="PANTHER" id="PTHR19271:SF16">
    <property type="entry name" value="CYTOCHROME B"/>
    <property type="match status" value="1"/>
</dbReference>
<dbReference type="Pfam" id="PF00032">
    <property type="entry name" value="Cytochrom_B_C"/>
    <property type="match status" value="1"/>
</dbReference>
<dbReference type="Pfam" id="PF00033">
    <property type="entry name" value="Cytochrome_B"/>
    <property type="match status" value="1"/>
</dbReference>
<dbReference type="PIRSF" id="PIRSF038885">
    <property type="entry name" value="COB"/>
    <property type="match status" value="1"/>
</dbReference>
<dbReference type="SUPFAM" id="SSF81648">
    <property type="entry name" value="a domain/subunit of cytochrome bc1 complex (Ubiquinol-cytochrome c reductase)"/>
    <property type="match status" value="1"/>
</dbReference>
<dbReference type="SUPFAM" id="SSF81342">
    <property type="entry name" value="Transmembrane di-heme cytochromes"/>
    <property type="match status" value="1"/>
</dbReference>
<dbReference type="PROSITE" id="PS51003">
    <property type="entry name" value="CYTB_CTER"/>
    <property type="match status" value="1"/>
</dbReference>
<dbReference type="PROSITE" id="PS51002">
    <property type="entry name" value="CYTB_NTER"/>
    <property type="match status" value="1"/>
</dbReference>
<keyword id="KW-0249">Electron transport</keyword>
<keyword id="KW-0349">Heme</keyword>
<keyword id="KW-0408">Iron</keyword>
<keyword id="KW-0472">Membrane</keyword>
<keyword id="KW-0479">Metal-binding</keyword>
<keyword id="KW-0496">Mitochondrion</keyword>
<keyword id="KW-0999">Mitochondrion inner membrane</keyword>
<keyword id="KW-0679">Respiratory chain</keyword>
<keyword id="KW-0812">Transmembrane</keyword>
<keyword id="KW-1133">Transmembrane helix</keyword>
<keyword id="KW-0813">Transport</keyword>
<keyword id="KW-0830">Ubiquinone</keyword>
<feature type="chain" id="PRO_0000061089" description="Cytochrome b">
    <location>
        <begin position="1"/>
        <end position="379"/>
    </location>
</feature>
<feature type="transmembrane region" description="Helical" evidence="2">
    <location>
        <begin position="33"/>
        <end position="53"/>
    </location>
</feature>
<feature type="transmembrane region" description="Helical" evidence="2">
    <location>
        <begin position="77"/>
        <end position="98"/>
    </location>
</feature>
<feature type="transmembrane region" description="Helical" evidence="2">
    <location>
        <begin position="113"/>
        <end position="133"/>
    </location>
</feature>
<feature type="transmembrane region" description="Helical" evidence="2">
    <location>
        <begin position="178"/>
        <end position="198"/>
    </location>
</feature>
<feature type="transmembrane region" description="Helical" evidence="2">
    <location>
        <begin position="226"/>
        <end position="246"/>
    </location>
</feature>
<feature type="transmembrane region" description="Helical" evidence="2">
    <location>
        <begin position="288"/>
        <end position="308"/>
    </location>
</feature>
<feature type="transmembrane region" description="Helical" evidence="2">
    <location>
        <begin position="320"/>
        <end position="340"/>
    </location>
</feature>
<feature type="transmembrane region" description="Helical" evidence="2">
    <location>
        <begin position="347"/>
        <end position="367"/>
    </location>
</feature>
<feature type="binding site" description="axial binding residue" evidence="2">
    <location>
        <position position="83"/>
    </location>
    <ligand>
        <name>heme b</name>
        <dbReference type="ChEBI" id="CHEBI:60344"/>
        <label>b562</label>
    </ligand>
    <ligandPart>
        <name>Fe</name>
        <dbReference type="ChEBI" id="CHEBI:18248"/>
    </ligandPart>
</feature>
<feature type="binding site" description="axial binding residue" evidence="2">
    <location>
        <position position="97"/>
    </location>
    <ligand>
        <name>heme b</name>
        <dbReference type="ChEBI" id="CHEBI:60344"/>
        <label>b566</label>
    </ligand>
    <ligandPart>
        <name>Fe</name>
        <dbReference type="ChEBI" id="CHEBI:18248"/>
    </ligandPart>
</feature>
<feature type="binding site" description="axial binding residue" evidence="2">
    <location>
        <position position="182"/>
    </location>
    <ligand>
        <name>heme b</name>
        <dbReference type="ChEBI" id="CHEBI:60344"/>
        <label>b562</label>
    </ligand>
    <ligandPart>
        <name>Fe</name>
        <dbReference type="ChEBI" id="CHEBI:18248"/>
    </ligandPart>
</feature>
<feature type="binding site" description="axial binding residue" evidence="2">
    <location>
        <position position="196"/>
    </location>
    <ligand>
        <name>heme b</name>
        <dbReference type="ChEBI" id="CHEBI:60344"/>
        <label>b566</label>
    </ligand>
    <ligandPart>
        <name>Fe</name>
        <dbReference type="ChEBI" id="CHEBI:18248"/>
    </ligandPart>
</feature>
<feature type="binding site" evidence="2">
    <location>
        <position position="201"/>
    </location>
    <ligand>
        <name>a ubiquinone</name>
        <dbReference type="ChEBI" id="CHEBI:16389"/>
    </ligand>
</feature>
<proteinExistence type="inferred from homology"/>
<sequence>MTNIRKSHPLLKIVNNAFIDLPAPSNISSWWNFGSLLGICLIMQIMTGLFLAMHYTSDTTTAFSSVAHICRDVNYGWIIRYLHANGASMFFICLYIHVGRGLYYGSYAFLETWNIGIILLFTVMATAFMGYVLPWGQMSFWGATVITNLLSAIPYVGTTLVEWIWGGFSVDKATLNRFFAFHFILPFIIAALAGVHLLFLHETGSNNPTGISSDMDKIPFHPYYTIKDILGALLLILILLLLVLFSPDLLGDPDNYTPANPLNTPPHIKPEWYFLFAYAILRSIPNKLGGVLALILSILILAFIPLLHTSKQRSMMFRPISQCLFWTLVADLLTLTWIGGQPVEPPFIMIGQVASILYFSLILILMPVAGIIENHILKW</sequence>
<accession>Q36227</accession>
<comment type="function">
    <text evidence="2">Component of the ubiquinol-cytochrome c reductase complex (complex III or cytochrome b-c1 complex) that is part of the mitochondrial respiratory chain. The b-c1 complex mediates electron transfer from ubiquinol to cytochrome c. Contributes to the generation of a proton gradient across the mitochondrial membrane that is then used for ATP synthesis.</text>
</comment>
<comment type="cofactor">
    <cofactor evidence="2">
        <name>heme b</name>
        <dbReference type="ChEBI" id="CHEBI:60344"/>
    </cofactor>
    <text evidence="2">Binds 2 heme b groups non-covalently.</text>
</comment>
<comment type="subunit">
    <text evidence="2">The cytochrome bc1 complex contains 11 subunits: 3 respiratory subunits (MT-CYB, CYC1 and UQCRFS1), 2 core proteins (UQCRC1 and UQCRC2) and 6 low-molecular weight proteins (UQCRH/QCR6, UQCRB/QCR7, UQCRQ/QCR8, UQCR10/QCR9, UQCR11/QCR10 and a cleavage product of UQCRFS1). This cytochrome bc1 complex then forms a dimer.</text>
</comment>
<comment type="subcellular location">
    <subcellularLocation>
        <location evidence="2">Mitochondrion inner membrane</location>
        <topology evidence="2">Multi-pass membrane protein</topology>
    </subcellularLocation>
</comment>
<comment type="miscellaneous">
    <text evidence="1">Heme 1 (or BL or b562) is low-potential and absorbs at about 562 nm, and heme 2 (or BH or b566) is high-potential and absorbs at about 566 nm.</text>
</comment>
<comment type="similarity">
    <text evidence="3 4">Belongs to the cytochrome b family.</text>
</comment>
<comment type="caution">
    <text evidence="2">The full-length protein contains only eight transmembrane helices, not nine as predicted by bioinformatics tools.</text>
</comment>
<organism>
    <name type="scientific">Lama vicugna</name>
    <name type="common">Vicugna</name>
    <name type="synonym">Vicugna vicugna</name>
    <dbReference type="NCBI Taxonomy" id="9843"/>
    <lineage>
        <taxon>Eukaryota</taxon>
        <taxon>Metazoa</taxon>
        <taxon>Chordata</taxon>
        <taxon>Craniata</taxon>
        <taxon>Vertebrata</taxon>
        <taxon>Euteleostomi</taxon>
        <taxon>Mammalia</taxon>
        <taxon>Eutheria</taxon>
        <taxon>Laurasiatheria</taxon>
        <taxon>Artiodactyla</taxon>
        <taxon>Tylopoda</taxon>
        <taxon>Camelidae</taxon>
        <taxon>Vicugna</taxon>
    </lineage>
</organism>
<protein>
    <recommendedName>
        <fullName>Cytochrome b</fullName>
    </recommendedName>
    <alternativeName>
        <fullName>Complex III subunit 3</fullName>
    </alternativeName>
    <alternativeName>
        <fullName>Complex III subunit III</fullName>
    </alternativeName>
    <alternativeName>
        <fullName>Cytochrome b-c1 complex subunit 3</fullName>
    </alternativeName>
    <alternativeName>
        <fullName>Ubiquinol-cytochrome-c reductase complex cytochrome b subunit</fullName>
    </alternativeName>
</protein>
<name>CYB_LAMVI</name>
<geneLocation type="mitochondrion"/>
<evidence type="ECO:0000250" key="1"/>
<evidence type="ECO:0000250" key="2">
    <source>
        <dbReference type="UniProtKB" id="P00157"/>
    </source>
</evidence>
<evidence type="ECO:0000255" key="3">
    <source>
        <dbReference type="PROSITE-ProRule" id="PRU00967"/>
    </source>
</evidence>
<evidence type="ECO:0000255" key="4">
    <source>
        <dbReference type="PROSITE-ProRule" id="PRU00968"/>
    </source>
</evidence>
<reference key="1">
    <citation type="journal article" date="1994" name="Proc. R. Soc. B">
        <title>Molecular evolution of the family Camelidae: a mitochondrial DNA study.</title>
        <authorList>
            <person name="Stanley H.F."/>
            <person name="Kadwell M."/>
            <person name="Wheeler J.C."/>
        </authorList>
    </citation>
    <scope>NUCLEOTIDE SEQUENCE [GENOMIC DNA]</scope>
</reference>
<gene>
    <name type="primary">MT-CYB</name>
    <name type="synonym">COB</name>
    <name type="synonym">CYTB</name>
    <name type="synonym">MTCYB</name>
</gene>